<comment type="subcellular location">
    <subcellularLocation>
        <location evidence="2">Cell membrane</location>
        <topology evidence="2">Multi-pass membrane protein</topology>
    </subcellularLocation>
</comment>
<comment type="similarity">
    <text evidence="2">Belongs to the EamA transporter family.</text>
</comment>
<name>Y1234_HELPY</name>
<dbReference type="EMBL" id="AE000511">
    <property type="protein sequence ID" value="AAD08277.1"/>
    <property type="molecule type" value="Genomic_DNA"/>
</dbReference>
<dbReference type="PIR" id="B64674">
    <property type="entry name" value="B64674"/>
</dbReference>
<dbReference type="RefSeq" id="NP_208026.1">
    <property type="nucleotide sequence ID" value="NC_000915.1"/>
</dbReference>
<dbReference type="RefSeq" id="WP_001246343.1">
    <property type="nucleotide sequence ID" value="NC_018939.1"/>
</dbReference>
<dbReference type="SMR" id="O25832"/>
<dbReference type="DIP" id="DIP-3419N"/>
<dbReference type="FunCoup" id="O25832">
    <property type="interactions" value="17"/>
</dbReference>
<dbReference type="IntAct" id="O25832">
    <property type="interactions" value="1"/>
</dbReference>
<dbReference type="MINT" id="O25832"/>
<dbReference type="STRING" id="85962.HP_1234"/>
<dbReference type="TCDB" id="2.A.7.28.9">
    <property type="family name" value="the drug/metabolite transporter (dmt) superfamily"/>
</dbReference>
<dbReference type="PaxDb" id="85962-C694_06370"/>
<dbReference type="EnsemblBacteria" id="AAD08277">
    <property type="protein sequence ID" value="AAD08277"/>
    <property type="gene ID" value="HP_1234"/>
</dbReference>
<dbReference type="KEGG" id="heo:C694_06370"/>
<dbReference type="KEGG" id="hpy:HP_1234"/>
<dbReference type="PATRIC" id="fig|85962.47.peg.1322"/>
<dbReference type="eggNOG" id="COG0697">
    <property type="taxonomic scope" value="Bacteria"/>
</dbReference>
<dbReference type="InParanoid" id="O25832"/>
<dbReference type="OrthoDB" id="5338756at2"/>
<dbReference type="PhylomeDB" id="O25832"/>
<dbReference type="Proteomes" id="UP000000429">
    <property type="component" value="Chromosome"/>
</dbReference>
<dbReference type="GO" id="GO:0016020">
    <property type="term" value="C:membrane"/>
    <property type="evidence" value="ECO:0000318"/>
    <property type="project" value="GO_Central"/>
</dbReference>
<dbReference type="GO" id="GO:0005886">
    <property type="term" value="C:plasma membrane"/>
    <property type="evidence" value="ECO:0007669"/>
    <property type="project" value="UniProtKB-SubCell"/>
</dbReference>
<dbReference type="Gene3D" id="1.10.3730.20">
    <property type="match status" value="1"/>
</dbReference>
<dbReference type="InterPro" id="IPR000620">
    <property type="entry name" value="EamA_dom"/>
</dbReference>
<dbReference type="PANTHER" id="PTHR22911">
    <property type="entry name" value="ACYL-MALONYL CONDENSING ENZYME-RELATED"/>
    <property type="match status" value="1"/>
</dbReference>
<dbReference type="PANTHER" id="PTHR22911:SF6">
    <property type="entry name" value="SOLUTE CARRIER FAMILY 35 MEMBER G1"/>
    <property type="match status" value="1"/>
</dbReference>
<dbReference type="Pfam" id="PF00892">
    <property type="entry name" value="EamA"/>
    <property type="match status" value="2"/>
</dbReference>
<dbReference type="SUPFAM" id="SSF103481">
    <property type="entry name" value="Multidrug resistance efflux transporter EmrE"/>
    <property type="match status" value="2"/>
</dbReference>
<keyword id="KW-1003">Cell membrane</keyword>
<keyword id="KW-0472">Membrane</keyword>
<keyword id="KW-1185">Reference proteome</keyword>
<keyword id="KW-0677">Repeat</keyword>
<keyword id="KW-0812">Transmembrane</keyword>
<keyword id="KW-1133">Transmembrane helix</keyword>
<keyword id="KW-0813">Transport</keyword>
<proteinExistence type="inferred from homology"/>
<feature type="chain" id="PRO_0000108193" description="Uncharacterized transporter HP_1234">
    <location>
        <begin position="1"/>
        <end position="298"/>
    </location>
</feature>
<feature type="transmembrane region" description="Helical" evidence="1">
    <location>
        <begin position="5"/>
        <end position="25"/>
    </location>
</feature>
<feature type="transmembrane region" description="Helical" evidence="1">
    <location>
        <begin position="36"/>
        <end position="56"/>
    </location>
</feature>
<feature type="transmembrane region" description="Helical" evidence="1">
    <location>
        <begin position="76"/>
        <end position="96"/>
    </location>
</feature>
<feature type="transmembrane region" description="Helical" evidence="1">
    <location>
        <begin position="97"/>
        <end position="117"/>
    </location>
</feature>
<feature type="transmembrane region" description="Helical" evidence="1">
    <location>
        <begin position="124"/>
        <end position="144"/>
    </location>
</feature>
<feature type="transmembrane region" description="Helical" evidence="1">
    <location>
        <begin position="147"/>
        <end position="167"/>
    </location>
</feature>
<feature type="transmembrane region" description="Helical" evidence="1">
    <location>
        <begin position="181"/>
        <end position="201"/>
    </location>
</feature>
<feature type="transmembrane region" description="Helical" evidence="1">
    <location>
        <begin position="216"/>
        <end position="236"/>
    </location>
</feature>
<feature type="transmembrane region" description="Helical" evidence="1">
    <location>
        <begin position="244"/>
        <end position="264"/>
    </location>
</feature>
<feature type="transmembrane region" description="Helical" evidence="1">
    <location>
        <begin position="272"/>
        <end position="292"/>
    </location>
</feature>
<feature type="domain" description="EamA 1">
    <location>
        <begin position="17"/>
        <end position="141"/>
    </location>
</feature>
<feature type="domain" description="EamA 2">
    <location>
        <begin position="183"/>
        <end position="288"/>
    </location>
</feature>
<protein>
    <recommendedName>
        <fullName>Uncharacterized transporter HP_1234</fullName>
    </recommendedName>
</protein>
<gene>
    <name type="ordered locus">HP_1234</name>
</gene>
<evidence type="ECO:0000255" key="1"/>
<evidence type="ECO:0000305" key="2"/>
<organism>
    <name type="scientific">Helicobacter pylori (strain ATCC 700392 / 26695)</name>
    <name type="common">Campylobacter pylori</name>
    <dbReference type="NCBI Taxonomy" id="85962"/>
    <lineage>
        <taxon>Bacteria</taxon>
        <taxon>Pseudomonadati</taxon>
        <taxon>Campylobacterota</taxon>
        <taxon>Epsilonproteobacteria</taxon>
        <taxon>Campylobacterales</taxon>
        <taxon>Helicobacteraceae</taxon>
        <taxon>Helicobacter</taxon>
    </lineage>
</organism>
<sequence length="298" mass="32885">MRNTILFGVSMILLANLCFGIMSAFVKITADYFSPMENVFYRSITMTLLLLLIYPFKPYRLKSYKQGGFKKLAFRVVVGGLAMLAFFYNIEKISLATATAFSQCAPIYTVLLSPLLLKEKLKRSTLISACIGIVGVVLISDPSVENVGPVEIFMGILSGIFVSLAYITLRDLREYYDKQAVILAFAFGMSLLGLVGMFIDIPFLSTGIHVPRKEDILWISLIGISGTLGQYFLTYAYMNAPAGIIAPIEYTRIVWGLLFGLYLGDTFLDLKSSLGVALILCSGLLIALPALLKELKKI</sequence>
<accession>O25832</accession>
<reference key="1">
    <citation type="journal article" date="1997" name="Nature">
        <title>The complete genome sequence of the gastric pathogen Helicobacter pylori.</title>
        <authorList>
            <person name="Tomb J.-F."/>
            <person name="White O."/>
            <person name="Kerlavage A.R."/>
            <person name="Clayton R.A."/>
            <person name="Sutton G.G."/>
            <person name="Fleischmann R.D."/>
            <person name="Ketchum K.A."/>
            <person name="Klenk H.-P."/>
            <person name="Gill S.R."/>
            <person name="Dougherty B.A."/>
            <person name="Nelson K.E."/>
            <person name="Quackenbush J."/>
            <person name="Zhou L."/>
            <person name="Kirkness E.F."/>
            <person name="Peterson S.N."/>
            <person name="Loftus B.J."/>
            <person name="Richardson D.L."/>
            <person name="Dodson R.J."/>
            <person name="Khalak H.G."/>
            <person name="Glodek A."/>
            <person name="McKenney K."/>
            <person name="FitzGerald L.M."/>
            <person name="Lee N."/>
            <person name="Adams M.D."/>
            <person name="Hickey E.K."/>
            <person name="Berg D.E."/>
            <person name="Gocayne J.D."/>
            <person name="Utterback T.R."/>
            <person name="Peterson J.D."/>
            <person name="Kelley J.M."/>
            <person name="Cotton M.D."/>
            <person name="Weidman J.F."/>
            <person name="Fujii C."/>
            <person name="Bowman C."/>
            <person name="Watthey L."/>
            <person name="Wallin E."/>
            <person name="Hayes W.S."/>
            <person name="Borodovsky M."/>
            <person name="Karp P.D."/>
            <person name="Smith H.O."/>
            <person name="Fraser C.M."/>
            <person name="Venter J.C."/>
        </authorList>
    </citation>
    <scope>NUCLEOTIDE SEQUENCE [LARGE SCALE GENOMIC DNA]</scope>
    <source>
        <strain>ATCC 700392 / 26695</strain>
    </source>
</reference>